<feature type="chain" id="PRO_0000194243" description="Mannose-6-phosphate isomerase">
    <location>
        <begin position="1"/>
        <end position="434"/>
    </location>
</feature>
<feature type="region of interest" description="Disordered" evidence="2">
    <location>
        <begin position="181"/>
        <end position="200"/>
    </location>
</feature>
<feature type="compositionally biased region" description="Polar residues" evidence="2">
    <location>
        <begin position="181"/>
        <end position="191"/>
    </location>
</feature>
<feature type="active site" evidence="1">
    <location>
        <position position="310"/>
    </location>
</feature>
<feature type="binding site" evidence="1">
    <location>
        <position position="109"/>
    </location>
    <ligand>
        <name>Zn(2+)</name>
        <dbReference type="ChEBI" id="CHEBI:29105"/>
    </ligand>
</feature>
<feature type="binding site" evidence="1">
    <location>
        <position position="111"/>
    </location>
    <ligand>
        <name>Zn(2+)</name>
        <dbReference type="ChEBI" id="CHEBI:29105"/>
    </ligand>
</feature>
<feature type="binding site" evidence="1">
    <location>
        <position position="136"/>
    </location>
    <ligand>
        <name>Zn(2+)</name>
        <dbReference type="ChEBI" id="CHEBI:29105"/>
    </ligand>
</feature>
<feature type="binding site" evidence="1">
    <location>
        <position position="291"/>
    </location>
    <ligand>
        <name>Zn(2+)</name>
        <dbReference type="ChEBI" id="CHEBI:29105"/>
    </ligand>
</feature>
<feature type="sequence conflict" description="In Ref. 1; AAG10203." evidence="3" ref="1">
    <original>S</original>
    <variation>A</variation>
    <location>
        <position position="38"/>
    </location>
</feature>
<feature type="sequence conflict" description="In Ref. 1; AAG10203." evidence="3" ref="1">
    <original>K</original>
    <variation>R</variation>
    <location>
        <position position="43"/>
    </location>
</feature>
<feature type="sequence conflict" description="In Ref. 1; AAG10203." evidence="3" ref="1">
    <original>K</original>
    <variation>R</variation>
    <location>
        <position position="71"/>
    </location>
</feature>
<feature type="sequence conflict" description="In Ref. 1; AAG10203." evidence="3" ref="1">
    <original>SS</original>
    <variation>TT</variation>
    <location>
        <begin position="79"/>
        <end position="80"/>
    </location>
</feature>
<feature type="sequence conflict" description="In Ref. 1; AAG10203." evidence="3" ref="1">
    <original>S</original>
    <variation>P</variation>
    <location>
        <position position="154"/>
    </location>
</feature>
<feature type="sequence conflict" description="In Ref. 1; AAG10203." evidence="3" ref="1">
    <original>G</original>
    <variation>D</variation>
    <location>
        <position position="183"/>
    </location>
</feature>
<feature type="sequence conflict" description="In Ref. 1; AAG10203." evidence="3" ref="1">
    <original>T</original>
    <variation>S</variation>
    <location>
        <position position="192"/>
    </location>
</feature>
<feature type="sequence conflict" description="In Ref. 1; AAG10203." evidence="3" ref="1">
    <original>L</original>
    <variation>H</variation>
    <location>
        <position position="224"/>
    </location>
</feature>
<feature type="sequence conflict" description="In Ref. 1; AAG10203." evidence="3" ref="1">
    <original>Q</original>
    <variation>K</variation>
    <location>
        <position position="237"/>
    </location>
</feature>
<feature type="sequence conflict" description="In Ref. 1; AAG10203." evidence="3" ref="1">
    <original>S</original>
    <variation>D</variation>
    <location>
        <position position="248"/>
    </location>
</feature>
<feature type="sequence conflict" description="In Ref. 1; AAG10203." evidence="3" ref="1">
    <original>P</original>
    <variation>S</variation>
    <location>
        <position position="343"/>
    </location>
</feature>
<feature type="sequence conflict" description="In Ref. 1; AAG10203." evidence="3" ref="1">
    <original>N</original>
    <variation>D</variation>
    <location>
        <position position="396"/>
    </location>
</feature>
<feature type="sequence conflict" description="In Ref. 1; AAG10203." evidence="3" ref="1">
    <original>RS</original>
    <variation>QT</variation>
    <location>
        <begin position="400"/>
        <end position="401"/>
    </location>
</feature>
<name>MPI_CRYNJ</name>
<protein>
    <recommendedName>
        <fullName>Mannose-6-phosphate isomerase</fullName>
        <ecNumber>5.3.1.8</ecNumber>
    </recommendedName>
    <alternativeName>
        <fullName>Phosphohexomutase</fullName>
    </alternativeName>
    <alternativeName>
        <fullName>Phosphomannose isomerase</fullName>
        <shortName>PMI</shortName>
    </alternativeName>
</protein>
<evidence type="ECO:0000250" key="1"/>
<evidence type="ECO:0000256" key="2">
    <source>
        <dbReference type="SAM" id="MobiDB-lite"/>
    </source>
</evidence>
<evidence type="ECO:0000305" key="3"/>
<sequence length="434" mass="47590">MSPSVFKISPGINSYDWGKKGSASLAAQLATTSIPDFSIDEDKAYAELWMGTHPNNPSRLSDNTLLSEHLKSHPELIGSSVSSKFEDCKDGSLPFLFKVLSIGTALSIQAHPDKPLAKKLFDEKPDVYKDPNHKPEMAIALTPFLAFLNFLPLSVLLLHLLTVPELQEFVDSSLTESLASSLGLPTSQPPDTSLFKPTESPATAEQKDILKQIFAALMSADKKLVEEAISKLIKRYQAKRDIKENEKSLVDLALRLNDQYPGDVGVLCVFLLNVVELKRGEAAFLGANEPHAYIEGDIIECMATSDNVVRAGLTPKLRDVDTLVSMLTYEAAPGNKQLLQPTPFQKGDDTTKLYDPPIAEFSVLRTELSKGMKTSHRPVEGPSLCVITEGEGVVRNGNDRSEFVRGDVIFVGAGKEVEWEAIKGLEMFRAYVEA</sequence>
<dbReference type="EC" id="5.3.1.8"/>
<dbReference type="EMBL" id="AF291701">
    <property type="protein sequence ID" value="AAG10203.1"/>
    <property type="molecule type" value="Genomic_DNA"/>
</dbReference>
<dbReference type="EMBL" id="AE017349">
    <property type="protein sequence ID" value="AAW45398.1"/>
    <property type="molecule type" value="Genomic_DNA"/>
</dbReference>
<dbReference type="RefSeq" id="XP_572705.1">
    <property type="nucleotide sequence ID" value="XM_572705.1"/>
</dbReference>
<dbReference type="SMR" id="Q9HFU4"/>
<dbReference type="FunCoup" id="Q9HFU4">
    <property type="interactions" value="373"/>
</dbReference>
<dbReference type="STRING" id="214684.Q9HFU4"/>
<dbReference type="PaxDb" id="214684-Q9HFU4"/>
<dbReference type="EnsemblFungi" id="AAW45398">
    <property type="protein sequence ID" value="AAW45398"/>
    <property type="gene ID" value="CNI02370"/>
</dbReference>
<dbReference type="GeneID" id="3259465"/>
<dbReference type="KEGG" id="cne:CNI02370"/>
<dbReference type="VEuPathDB" id="FungiDB:CNI02370"/>
<dbReference type="eggNOG" id="KOG2757">
    <property type="taxonomic scope" value="Eukaryota"/>
</dbReference>
<dbReference type="HOGENOM" id="CLU_026967_0_0_1"/>
<dbReference type="InParanoid" id="Q9HFU4"/>
<dbReference type="OMA" id="DIGLFCG"/>
<dbReference type="OrthoDB" id="6605218at2759"/>
<dbReference type="UniPathway" id="UPA00126">
    <property type="reaction ID" value="UER00423"/>
</dbReference>
<dbReference type="PHI-base" id="PHI:220"/>
<dbReference type="Proteomes" id="UP000002149">
    <property type="component" value="Chromosome 9"/>
</dbReference>
<dbReference type="GO" id="GO:0005829">
    <property type="term" value="C:cytosol"/>
    <property type="evidence" value="ECO:0000318"/>
    <property type="project" value="GO_Central"/>
</dbReference>
<dbReference type="GO" id="GO:0004476">
    <property type="term" value="F:mannose-6-phosphate isomerase activity"/>
    <property type="evidence" value="ECO:0000318"/>
    <property type="project" value="GO_Central"/>
</dbReference>
<dbReference type="GO" id="GO:0008270">
    <property type="term" value="F:zinc ion binding"/>
    <property type="evidence" value="ECO:0007669"/>
    <property type="project" value="InterPro"/>
</dbReference>
<dbReference type="GO" id="GO:0005975">
    <property type="term" value="P:carbohydrate metabolic process"/>
    <property type="evidence" value="ECO:0007669"/>
    <property type="project" value="InterPro"/>
</dbReference>
<dbReference type="GO" id="GO:0009298">
    <property type="term" value="P:GDP-mannose biosynthetic process"/>
    <property type="evidence" value="ECO:0000318"/>
    <property type="project" value="GO_Central"/>
</dbReference>
<dbReference type="CDD" id="cd07011">
    <property type="entry name" value="cupin_PMI_type_I_N"/>
    <property type="match status" value="1"/>
</dbReference>
<dbReference type="FunFam" id="1.10.441.10:FF:000001">
    <property type="entry name" value="Mannose-6-phosphate isomerase"/>
    <property type="match status" value="1"/>
</dbReference>
<dbReference type="FunFam" id="2.60.120.10:FF:000044">
    <property type="entry name" value="Mannose-6-phosphate isomerase"/>
    <property type="match status" value="1"/>
</dbReference>
<dbReference type="Gene3D" id="2.60.120.10">
    <property type="entry name" value="Jelly Rolls"/>
    <property type="match status" value="2"/>
</dbReference>
<dbReference type="Gene3D" id="1.10.441.10">
    <property type="entry name" value="Phosphomannose Isomerase, domain 2"/>
    <property type="match status" value="1"/>
</dbReference>
<dbReference type="InterPro" id="IPR001250">
    <property type="entry name" value="Man6P_Isoase-1"/>
</dbReference>
<dbReference type="InterPro" id="IPR016305">
    <property type="entry name" value="Mannose-6-P_Isomerase"/>
</dbReference>
<dbReference type="InterPro" id="IPR018050">
    <property type="entry name" value="Pmannose_isomerase-type1_CS"/>
</dbReference>
<dbReference type="InterPro" id="IPR046456">
    <property type="entry name" value="PMI_typeI_C"/>
</dbReference>
<dbReference type="InterPro" id="IPR046457">
    <property type="entry name" value="PMI_typeI_cat"/>
</dbReference>
<dbReference type="InterPro" id="IPR046458">
    <property type="entry name" value="PMI_typeI_hel"/>
</dbReference>
<dbReference type="InterPro" id="IPR014710">
    <property type="entry name" value="RmlC-like_jellyroll"/>
</dbReference>
<dbReference type="InterPro" id="IPR011051">
    <property type="entry name" value="RmlC_Cupin_sf"/>
</dbReference>
<dbReference type="NCBIfam" id="TIGR00218">
    <property type="entry name" value="manA"/>
    <property type="match status" value="1"/>
</dbReference>
<dbReference type="PANTHER" id="PTHR10309">
    <property type="entry name" value="MANNOSE-6-PHOSPHATE ISOMERASE"/>
    <property type="match status" value="1"/>
</dbReference>
<dbReference type="PANTHER" id="PTHR10309:SF0">
    <property type="entry name" value="MANNOSE-6-PHOSPHATE ISOMERASE"/>
    <property type="match status" value="1"/>
</dbReference>
<dbReference type="Pfam" id="PF01238">
    <property type="entry name" value="PMI_typeI_C"/>
    <property type="match status" value="1"/>
</dbReference>
<dbReference type="Pfam" id="PF20511">
    <property type="entry name" value="PMI_typeI_cat"/>
    <property type="match status" value="1"/>
</dbReference>
<dbReference type="Pfam" id="PF20512">
    <property type="entry name" value="PMI_typeI_hel"/>
    <property type="match status" value="1"/>
</dbReference>
<dbReference type="PIRSF" id="PIRSF001480">
    <property type="entry name" value="Mannose-6-phosphate_isomerase"/>
    <property type="match status" value="1"/>
</dbReference>
<dbReference type="PRINTS" id="PR00714">
    <property type="entry name" value="MAN6PISMRASE"/>
</dbReference>
<dbReference type="SUPFAM" id="SSF51182">
    <property type="entry name" value="RmlC-like cupins"/>
    <property type="match status" value="1"/>
</dbReference>
<dbReference type="PROSITE" id="PS00965">
    <property type="entry name" value="PMI_I_1"/>
    <property type="match status" value="1"/>
</dbReference>
<dbReference type="PROSITE" id="PS00966">
    <property type="entry name" value="PMI_I_2"/>
    <property type="match status" value="1"/>
</dbReference>
<keyword id="KW-0963">Cytoplasm</keyword>
<keyword id="KW-0413">Isomerase</keyword>
<keyword id="KW-0479">Metal-binding</keyword>
<keyword id="KW-1185">Reference proteome</keyword>
<keyword id="KW-0862">Zinc</keyword>
<comment type="function">
    <text evidence="1">Involved in the synthesis of the GDP-mannose and dolichol-phosphate-mannose required for a number of critical mannosyl transfer reactions.</text>
</comment>
<comment type="catalytic activity">
    <reaction>
        <text>D-mannose 6-phosphate = D-fructose 6-phosphate</text>
        <dbReference type="Rhea" id="RHEA:12356"/>
        <dbReference type="ChEBI" id="CHEBI:58735"/>
        <dbReference type="ChEBI" id="CHEBI:61527"/>
        <dbReference type="EC" id="5.3.1.8"/>
    </reaction>
</comment>
<comment type="cofactor">
    <cofactor evidence="1">
        <name>Zn(2+)</name>
        <dbReference type="ChEBI" id="CHEBI:29105"/>
    </cofactor>
    <text evidence="1">Binds 1 zinc ion per subunit.</text>
</comment>
<comment type="pathway">
    <text>Nucleotide-sugar biosynthesis; GDP-alpha-D-mannose biosynthesis; alpha-D-mannose 1-phosphate from D-fructose 6-phosphate: step 1/2.</text>
</comment>
<comment type="subcellular location">
    <subcellularLocation>
        <location evidence="1">Cytoplasm</location>
    </subcellularLocation>
</comment>
<comment type="similarity">
    <text evidence="3">Belongs to the mannose-6-phosphate isomerase type 1 family.</text>
</comment>
<reference key="1">
    <citation type="journal article" date="2001" name="Mol. Microbiol.">
        <title>Identification and characterization of the Cryptococcus neoformans phosphomannose isomerase-encoding gene, MAN1, and its impact on pathogenicity.</title>
        <authorList>
            <person name="Wills E.A."/>
            <person name="Roberts I.S."/>
            <person name="Del Poeta M."/>
            <person name="Rivera J."/>
            <person name="Casadevall A."/>
            <person name="Cox G.M."/>
            <person name="Perfect J.R."/>
        </authorList>
    </citation>
    <scope>NUCLEOTIDE SEQUENCE [GENOMIC DNA]</scope>
</reference>
<reference key="2">
    <citation type="journal article" date="2005" name="Science">
        <title>The genome of the basidiomycetous yeast and human pathogen Cryptococcus neoformans.</title>
        <authorList>
            <person name="Loftus B.J."/>
            <person name="Fung E."/>
            <person name="Roncaglia P."/>
            <person name="Rowley D."/>
            <person name="Amedeo P."/>
            <person name="Bruno D."/>
            <person name="Vamathevan J."/>
            <person name="Miranda M."/>
            <person name="Anderson I.J."/>
            <person name="Fraser J.A."/>
            <person name="Allen J.E."/>
            <person name="Bosdet I.E."/>
            <person name="Brent M.R."/>
            <person name="Chiu R."/>
            <person name="Doering T.L."/>
            <person name="Donlin M.J."/>
            <person name="D'Souza C.A."/>
            <person name="Fox D.S."/>
            <person name="Grinberg V."/>
            <person name="Fu J."/>
            <person name="Fukushima M."/>
            <person name="Haas B.J."/>
            <person name="Huang J.C."/>
            <person name="Janbon G."/>
            <person name="Jones S.J.M."/>
            <person name="Koo H.L."/>
            <person name="Krzywinski M.I."/>
            <person name="Kwon-Chung K.J."/>
            <person name="Lengeler K.B."/>
            <person name="Maiti R."/>
            <person name="Marra M.A."/>
            <person name="Marra R.E."/>
            <person name="Mathewson C.A."/>
            <person name="Mitchell T.G."/>
            <person name="Pertea M."/>
            <person name="Riggs F.R."/>
            <person name="Salzberg S.L."/>
            <person name="Schein J.E."/>
            <person name="Shvartsbeyn A."/>
            <person name="Shin H."/>
            <person name="Shumway M."/>
            <person name="Specht C.A."/>
            <person name="Suh B.B."/>
            <person name="Tenney A."/>
            <person name="Utterback T.R."/>
            <person name="Wickes B.L."/>
            <person name="Wortman J.R."/>
            <person name="Wye N.H."/>
            <person name="Kronstad J.W."/>
            <person name="Lodge J.K."/>
            <person name="Heitman J."/>
            <person name="Davis R.W."/>
            <person name="Fraser C.M."/>
            <person name="Hyman R.W."/>
        </authorList>
    </citation>
    <scope>NUCLEOTIDE SEQUENCE [LARGE SCALE GENOMIC DNA]</scope>
    <source>
        <strain>JEC21 / ATCC MYA-565</strain>
    </source>
</reference>
<organism>
    <name type="scientific">Cryptococcus neoformans var. neoformans serotype D (strain JEC21 / ATCC MYA-565)</name>
    <name type="common">Filobasidiella neoformans</name>
    <dbReference type="NCBI Taxonomy" id="214684"/>
    <lineage>
        <taxon>Eukaryota</taxon>
        <taxon>Fungi</taxon>
        <taxon>Dikarya</taxon>
        <taxon>Basidiomycota</taxon>
        <taxon>Agaricomycotina</taxon>
        <taxon>Tremellomycetes</taxon>
        <taxon>Tremellales</taxon>
        <taxon>Cryptococcaceae</taxon>
        <taxon>Cryptococcus</taxon>
        <taxon>Cryptococcus neoformans species complex</taxon>
    </lineage>
</organism>
<proteinExistence type="inferred from homology"/>
<accession>Q9HFU4</accession>
<accession>Q5KBJ0</accession>
<gene>
    <name type="primary">MAN1</name>
    <name type="ordered locus">CNI02370</name>
</gene>